<name>NUSB_HERA2</name>
<evidence type="ECO:0000255" key="1">
    <source>
        <dbReference type="HAMAP-Rule" id="MF_00073"/>
    </source>
</evidence>
<accession>A9AXI5</accession>
<reference key="1">
    <citation type="journal article" date="2011" name="Stand. Genomic Sci.">
        <title>Complete genome sequence of the filamentous gliding predatory bacterium Herpetosiphon aurantiacus type strain (114-95(T)).</title>
        <authorList>
            <person name="Kiss H."/>
            <person name="Nett M."/>
            <person name="Domin N."/>
            <person name="Martin K."/>
            <person name="Maresca J.A."/>
            <person name="Copeland A."/>
            <person name="Lapidus A."/>
            <person name="Lucas S."/>
            <person name="Berry K.W."/>
            <person name="Glavina Del Rio T."/>
            <person name="Dalin E."/>
            <person name="Tice H."/>
            <person name="Pitluck S."/>
            <person name="Richardson P."/>
            <person name="Bruce D."/>
            <person name="Goodwin L."/>
            <person name="Han C."/>
            <person name="Detter J.C."/>
            <person name="Schmutz J."/>
            <person name="Brettin T."/>
            <person name="Land M."/>
            <person name="Hauser L."/>
            <person name="Kyrpides N.C."/>
            <person name="Ivanova N."/>
            <person name="Goeker M."/>
            <person name="Woyke T."/>
            <person name="Klenk H.P."/>
            <person name="Bryant D.A."/>
        </authorList>
    </citation>
    <scope>NUCLEOTIDE SEQUENCE [LARGE SCALE GENOMIC DNA]</scope>
    <source>
        <strain>ATCC 23779 / DSM 785 / 114-95</strain>
    </source>
</reference>
<keyword id="KW-0694">RNA-binding</keyword>
<keyword id="KW-0804">Transcription</keyword>
<keyword id="KW-0889">Transcription antitermination</keyword>
<keyword id="KW-0805">Transcription regulation</keyword>
<dbReference type="EMBL" id="CP000875">
    <property type="protein sequence ID" value="ABX03399.1"/>
    <property type="molecule type" value="Genomic_DNA"/>
</dbReference>
<dbReference type="SMR" id="A9AXI5"/>
<dbReference type="FunCoup" id="A9AXI5">
    <property type="interactions" value="267"/>
</dbReference>
<dbReference type="STRING" id="316274.Haur_0751"/>
<dbReference type="KEGG" id="hau:Haur_0751"/>
<dbReference type="eggNOG" id="COG0781">
    <property type="taxonomic scope" value="Bacteria"/>
</dbReference>
<dbReference type="HOGENOM" id="CLU_087843_3_2_0"/>
<dbReference type="InParanoid" id="A9AXI5"/>
<dbReference type="Proteomes" id="UP000000787">
    <property type="component" value="Chromosome"/>
</dbReference>
<dbReference type="GO" id="GO:0005829">
    <property type="term" value="C:cytosol"/>
    <property type="evidence" value="ECO:0007669"/>
    <property type="project" value="TreeGrafter"/>
</dbReference>
<dbReference type="GO" id="GO:0003723">
    <property type="term" value="F:RNA binding"/>
    <property type="evidence" value="ECO:0007669"/>
    <property type="project" value="UniProtKB-UniRule"/>
</dbReference>
<dbReference type="GO" id="GO:0006353">
    <property type="term" value="P:DNA-templated transcription termination"/>
    <property type="evidence" value="ECO:0007669"/>
    <property type="project" value="UniProtKB-UniRule"/>
</dbReference>
<dbReference type="GO" id="GO:0031564">
    <property type="term" value="P:transcription antitermination"/>
    <property type="evidence" value="ECO:0007669"/>
    <property type="project" value="UniProtKB-KW"/>
</dbReference>
<dbReference type="Gene3D" id="1.10.940.10">
    <property type="entry name" value="NusB-like"/>
    <property type="match status" value="1"/>
</dbReference>
<dbReference type="HAMAP" id="MF_00073">
    <property type="entry name" value="NusB"/>
    <property type="match status" value="1"/>
</dbReference>
<dbReference type="InterPro" id="IPR035926">
    <property type="entry name" value="NusB-like_sf"/>
</dbReference>
<dbReference type="InterPro" id="IPR011605">
    <property type="entry name" value="NusB_fam"/>
</dbReference>
<dbReference type="InterPro" id="IPR006027">
    <property type="entry name" value="NusB_RsmB_TIM44"/>
</dbReference>
<dbReference type="NCBIfam" id="TIGR01951">
    <property type="entry name" value="nusB"/>
    <property type="match status" value="1"/>
</dbReference>
<dbReference type="PANTHER" id="PTHR11078:SF3">
    <property type="entry name" value="ANTITERMINATION NUSB DOMAIN-CONTAINING PROTEIN"/>
    <property type="match status" value="1"/>
</dbReference>
<dbReference type="PANTHER" id="PTHR11078">
    <property type="entry name" value="N UTILIZATION SUBSTANCE PROTEIN B-RELATED"/>
    <property type="match status" value="1"/>
</dbReference>
<dbReference type="Pfam" id="PF01029">
    <property type="entry name" value="NusB"/>
    <property type="match status" value="1"/>
</dbReference>
<dbReference type="SUPFAM" id="SSF48013">
    <property type="entry name" value="NusB-like"/>
    <property type="match status" value="1"/>
</dbReference>
<feature type="chain" id="PRO_1000192444" description="Transcription antitermination protein NusB">
    <location>
        <begin position="1"/>
        <end position="146"/>
    </location>
</feature>
<protein>
    <recommendedName>
        <fullName evidence="1">Transcription antitermination protein NusB</fullName>
    </recommendedName>
    <alternativeName>
        <fullName evidence="1">Antitermination factor NusB</fullName>
    </alternativeName>
</protein>
<proteinExistence type="inferred from homology"/>
<organism>
    <name type="scientific">Herpetosiphon aurantiacus (strain ATCC 23779 / DSM 785 / 114-95)</name>
    <dbReference type="NCBI Taxonomy" id="316274"/>
    <lineage>
        <taxon>Bacteria</taxon>
        <taxon>Bacillati</taxon>
        <taxon>Chloroflexota</taxon>
        <taxon>Chloroflexia</taxon>
        <taxon>Herpetosiphonales</taxon>
        <taxon>Herpetosiphonaceae</taxon>
        <taxon>Herpetosiphon</taxon>
    </lineage>
</organism>
<comment type="function">
    <text evidence="1">Involved in transcription antitermination. Required for transcription of ribosomal RNA (rRNA) genes. Binds specifically to the boxA antiterminator sequence of the ribosomal RNA (rrn) operons.</text>
</comment>
<comment type="similarity">
    <text evidence="1">Belongs to the NusB family.</text>
</comment>
<gene>
    <name evidence="1" type="primary">nusB</name>
    <name type="ordered locus">Haur_0751</name>
</gene>
<sequence length="146" mass="16045">MSSRTVGSLRHRVRAAALQALFELDQTTHDLDSVVARISDDEMFSAEGRDFFARIVNGAWVNRQEIDDLIAKIAPSWPVHQMPGVDIAVLRIALFEILYDAAADKAPVKAVINEAVELAKHFGSDNSGRFVNGVLSTVVNKPESEE</sequence>